<evidence type="ECO:0000255" key="1">
    <source>
        <dbReference type="HAMAP-Rule" id="MF_00248"/>
    </source>
</evidence>
<protein>
    <recommendedName>
        <fullName evidence="1">ATP-dependent protease subunit HslV</fullName>
        <ecNumber evidence="1">3.4.25.2</ecNumber>
    </recommendedName>
</protein>
<dbReference type="EC" id="3.4.25.2" evidence="1"/>
<dbReference type="EMBL" id="AM260522">
    <property type="protein sequence ID" value="CAJ99665.1"/>
    <property type="molecule type" value="Genomic_DNA"/>
</dbReference>
<dbReference type="RefSeq" id="WP_011577777.1">
    <property type="nucleotide sequence ID" value="NC_008229.1"/>
</dbReference>
<dbReference type="SMR" id="Q17XG1"/>
<dbReference type="STRING" id="382638.Hac_0883"/>
<dbReference type="GeneID" id="31758291"/>
<dbReference type="KEGG" id="hac:Hac_0883"/>
<dbReference type="eggNOG" id="COG5405">
    <property type="taxonomic scope" value="Bacteria"/>
</dbReference>
<dbReference type="HOGENOM" id="CLU_093872_1_1_7"/>
<dbReference type="OrthoDB" id="9804884at2"/>
<dbReference type="BioCyc" id="HACI382638:HAC_RS03800-MONOMER"/>
<dbReference type="Proteomes" id="UP000000775">
    <property type="component" value="Chromosome"/>
</dbReference>
<dbReference type="GO" id="GO:0009376">
    <property type="term" value="C:HslUV protease complex"/>
    <property type="evidence" value="ECO:0007669"/>
    <property type="project" value="UniProtKB-UniRule"/>
</dbReference>
<dbReference type="GO" id="GO:0005839">
    <property type="term" value="C:proteasome core complex"/>
    <property type="evidence" value="ECO:0007669"/>
    <property type="project" value="InterPro"/>
</dbReference>
<dbReference type="GO" id="GO:0046872">
    <property type="term" value="F:metal ion binding"/>
    <property type="evidence" value="ECO:0007669"/>
    <property type="project" value="UniProtKB-KW"/>
</dbReference>
<dbReference type="GO" id="GO:0004298">
    <property type="term" value="F:threonine-type endopeptidase activity"/>
    <property type="evidence" value="ECO:0007669"/>
    <property type="project" value="UniProtKB-KW"/>
</dbReference>
<dbReference type="GO" id="GO:0051603">
    <property type="term" value="P:proteolysis involved in protein catabolic process"/>
    <property type="evidence" value="ECO:0007669"/>
    <property type="project" value="InterPro"/>
</dbReference>
<dbReference type="Gene3D" id="3.60.20.10">
    <property type="entry name" value="Glutamine Phosphoribosylpyrophosphate, subunit 1, domain 1"/>
    <property type="match status" value="1"/>
</dbReference>
<dbReference type="HAMAP" id="MF_00248">
    <property type="entry name" value="HslV"/>
    <property type="match status" value="1"/>
</dbReference>
<dbReference type="InterPro" id="IPR022281">
    <property type="entry name" value="ATP-dep_Prtase_HsIV_su"/>
</dbReference>
<dbReference type="InterPro" id="IPR029055">
    <property type="entry name" value="Ntn_hydrolases_N"/>
</dbReference>
<dbReference type="InterPro" id="IPR001353">
    <property type="entry name" value="Proteasome_sua/b"/>
</dbReference>
<dbReference type="InterPro" id="IPR023333">
    <property type="entry name" value="Proteasome_suB-type"/>
</dbReference>
<dbReference type="NCBIfam" id="TIGR03692">
    <property type="entry name" value="ATP_dep_HslV"/>
    <property type="match status" value="1"/>
</dbReference>
<dbReference type="NCBIfam" id="NF003964">
    <property type="entry name" value="PRK05456.1"/>
    <property type="match status" value="1"/>
</dbReference>
<dbReference type="PANTHER" id="PTHR32194:SF0">
    <property type="entry name" value="ATP-DEPENDENT PROTEASE SUBUNIT HSLV"/>
    <property type="match status" value="1"/>
</dbReference>
<dbReference type="PANTHER" id="PTHR32194">
    <property type="entry name" value="METALLOPROTEASE TLDD"/>
    <property type="match status" value="1"/>
</dbReference>
<dbReference type="Pfam" id="PF00227">
    <property type="entry name" value="Proteasome"/>
    <property type="match status" value="1"/>
</dbReference>
<dbReference type="SUPFAM" id="SSF56235">
    <property type="entry name" value="N-terminal nucleophile aminohydrolases (Ntn hydrolases)"/>
    <property type="match status" value="1"/>
</dbReference>
<dbReference type="PROSITE" id="PS51476">
    <property type="entry name" value="PROTEASOME_BETA_2"/>
    <property type="match status" value="1"/>
</dbReference>
<keyword id="KW-0021">Allosteric enzyme</keyword>
<keyword id="KW-0963">Cytoplasm</keyword>
<keyword id="KW-0378">Hydrolase</keyword>
<keyword id="KW-0479">Metal-binding</keyword>
<keyword id="KW-0645">Protease</keyword>
<keyword id="KW-0915">Sodium</keyword>
<keyword id="KW-0346">Stress response</keyword>
<keyword id="KW-0888">Threonine protease</keyword>
<feature type="chain" id="PRO_1000012619" description="ATP-dependent protease subunit HslV">
    <location>
        <begin position="1"/>
        <end position="180"/>
    </location>
</feature>
<feature type="active site" evidence="1">
    <location>
        <position position="5"/>
    </location>
</feature>
<feature type="binding site" evidence="1">
    <location>
        <position position="165"/>
    </location>
    <ligand>
        <name>Na(+)</name>
        <dbReference type="ChEBI" id="CHEBI:29101"/>
    </ligand>
</feature>
<feature type="binding site" evidence="1">
    <location>
        <position position="168"/>
    </location>
    <ligand>
        <name>Na(+)</name>
        <dbReference type="ChEBI" id="CHEBI:29101"/>
    </ligand>
</feature>
<feature type="binding site" evidence="1">
    <location>
        <position position="171"/>
    </location>
    <ligand>
        <name>Na(+)</name>
        <dbReference type="ChEBI" id="CHEBI:29101"/>
    </ligand>
</feature>
<comment type="function">
    <text evidence="1">Protease subunit of a proteasome-like degradation complex believed to be a general protein degrading machinery.</text>
</comment>
<comment type="catalytic activity">
    <reaction evidence="1">
        <text>ATP-dependent cleavage of peptide bonds with broad specificity.</text>
        <dbReference type="EC" id="3.4.25.2"/>
    </reaction>
</comment>
<comment type="activity regulation">
    <text evidence="1">Allosterically activated by HslU binding.</text>
</comment>
<comment type="subunit">
    <text evidence="1">A double ring-shaped homohexamer of HslV is capped on each side by a ring-shaped HslU homohexamer. The assembly of the HslU/HslV complex is dependent on binding of ATP.</text>
</comment>
<comment type="subcellular location">
    <subcellularLocation>
        <location evidence="1">Cytoplasm</location>
    </subcellularLocation>
</comment>
<comment type="similarity">
    <text evidence="1">Belongs to the peptidase T1B family. HslV subfamily.</text>
</comment>
<accession>Q17XG1</accession>
<organism>
    <name type="scientific">Helicobacter acinonychis (strain Sheeba)</name>
    <dbReference type="NCBI Taxonomy" id="382638"/>
    <lineage>
        <taxon>Bacteria</taxon>
        <taxon>Pseudomonadati</taxon>
        <taxon>Campylobacterota</taxon>
        <taxon>Epsilonproteobacteria</taxon>
        <taxon>Campylobacterales</taxon>
        <taxon>Helicobacteraceae</taxon>
        <taxon>Helicobacter</taxon>
    </lineage>
</organism>
<sequence length="180" mass="19894">MFEATTILGYRGEFNNKKFALIGGDGQVTLGNCVVKANATKIRSLYHNQVLSGFAGSTADAFSLFDMFERILESKKGDLFKSVVDFSKEWRKDKYLRRLEAMMIVLNLDHIFILSGTGDVLEAEDNKIAAIGSGGNYALSAARALDCFAHLEPKKLVEESLKIAGDLCIYTNTNIKILEL</sequence>
<gene>
    <name evidence="1" type="primary">hslV</name>
    <name type="ordered locus">Hac_0883</name>
</gene>
<reference key="1">
    <citation type="journal article" date="2006" name="PLoS Genet.">
        <title>Who ate whom? Adaptive Helicobacter genomic changes that accompanied a host jump from early humans to large felines.</title>
        <authorList>
            <person name="Eppinger M."/>
            <person name="Baar C."/>
            <person name="Linz B."/>
            <person name="Raddatz G."/>
            <person name="Lanz C."/>
            <person name="Keller H."/>
            <person name="Morelli G."/>
            <person name="Gressmann H."/>
            <person name="Achtman M."/>
            <person name="Schuster S.C."/>
        </authorList>
    </citation>
    <scope>NUCLEOTIDE SEQUENCE [LARGE SCALE GENOMIC DNA]</scope>
    <source>
        <strain>Sheeba</strain>
    </source>
</reference>
<name>HSLV_HELAH</name>
<proteinExistence type="inferred from homology"/>